<protein>
    <recommendedName>
        <fullName evidence="1">Tyrosine recombinase XerD</fullName>
    </recommendedName>
</protein>
<reference key="1">
    <citation type="journal article" date="2004" name="Nucleic Acids Res.">
        <title>Whole genome comparisons of serotype 4b and 1/2a strains of the food-borne pathogen Listeria monocytogenes reveal new insights into the core genome components of this species.</title>
        <authorList>
            <person name="Nelson K.E."/>
            <person name="Fouts D.E."/>
            <person name="Mongodin E.F."/>
            <person name="Ravel J."/>
            <person name="DeBoy R.T."/>
            <person name="Kolonay J.F."/>
            <person name="Rasko D.A."/>
            <person name="Angiuoli S.V."/>
            <person name="Gill S.R."/>
            <person name="Paulsen I.T."/>
            <person name="Peterson J.D."/>
            <person name="White O."/>
            <person name="Nelson W.C."/>
            <person name="Nierman W.C."/>
            <person name="Beanan M.J."/>
            <person name="Brinkac L.M."/>
            <person name="Daugherty S.C."/>
            <person name="Dodson R.J."/>
            <person name="Durkin A.S."/>
            <person name="Madupu R."/>
            <person name="Haft D.H."/>
            <person name="Selengut J."/>
            <person name="Van Aken S.E."/>
            <person name="Khouri H.M."/>
            <person name="Fedorova N."/>
            <person name="Forberger H.A."/>
            <person name="Tran B."/>
            <person name="Kathariou S."/>
            <person name="Wonderling L.D."/>
            <person name="Uhlich G.A."/>
            <person name="Bayles D.O."/>
            <person name="Luchansky J.B."/>
            <person name="Fraser C.M."/>
        </authorList>
    </citation>
    <scope>NUCLEOTIDE SEQUENCE [LARGE SCALE GENOMIC DNA]</scope>
    <source>
        <strain>F2365</strain>
    </source>
</reference>
<sequence length="297" mass="33932">MNDLIEDFLHFLIVERGLSANTIKAYERDLRYFVSYMDVAKGLTDPNTLERSDIVGFMAFARQEGKSARSVARYIASLRSFFHYLMHDGKMSHDPMIQIETPKQAQGLPKVLNLDDVEKLLSSSDTSTPLGLRDQAMMEILYATGLRVTELVSLKMDDLHLHMGFIQTIGKGDKERIIPLGKTATTVLEKYLEEARPKLRRPKYRNDFVFLNHHGQGLTRQGFWKILKGIAKESGIEKPITPHTLRHSFATHLLENGADLRSVQELLGHADISTTQIYTHVTKLRLKDVYKQFHPRA</sequence>
<proteinExistence type="inferred from homology"/>
<comment type="function">
    <text evidence="1">Site-specific tyrosine recombinase, which acts by catalyzing the cutting and rejoining of the recombining DNA molecules. The XerC-XerD complex is essential to convert dimers of the bacterial chromosome into monomers to permit their segregation at cell division. It also contributes to the segregational stability of plasmids.</text>
</comment>
<comment type="subunit">
    <text evidence="1">Forms a cyclic heterotetrameric complex composed of two molecules of XerC and two molecules of XerD.</text>
</comment>
<comment type="subcellular location">
    <subcellularLocation>
        <location evidence="1">Cytoplasm</location>
    </subcellularLocation>
</comment>
<comment type="similarity">
    <text evidence="1">Belongs to the 'phage' integrase family. XerD subfamily.</text>
</comment>
<organism>
    <name type="scientific">Listeria monocytogenes serotype 4b (strain F2365)</name>
    <dbReference type="NCBI Taxonomy" id="265669"/>
    <lineage>
        <taxon>Bacteria</taxon>
        <taxon>Bacillati</taxon>
        <taxon>Bacillota</taxon>
        <taxon>Bacilli</taxon>
        <taxon>Bacillales</taxon>
        <taxon>Listeriaceae</taxon>
        <taxon>Listeria</taxon>
    </lineage>
</organism>
<dbReference type="EMBL" id="AE017262">
    <property type="protein sequence ID" value="AAT04755.1"/>
    <property type="molecule type" value="Genomic_DNA"/>
</dbReference>
<dbReference type="RefSeq" id="WP_003725943.1">
    <property type="nucleotide sequence ID" value="NC_002973.6"/>
</dbReference>
<dbReference type="SMR" id="Q71Y59"/>
<dbReference type="KEGG" id="lmf:LMOf2365_1985"/>
<dbReference type="HOGENOM" id="CLU_027562_9_6_9"/>
<dbReference type="GO" id="GO:0005737">
    <property type="term" value="C:cytoplasm"/>
    <property type="evidence" value="ECO:0007669"/>
    <property type="project" value="UniProtKB-SubCell"/>
</dbReference>
<dbReference type="GO" id="GO:0003677">
    <property type="term" value="F:DNA binding"/>
    <property type="evidence" value="ECO:0007669"/>
    <property type="project" value="UniProtKB-KW"/>
</dbReference>
<dbReference type="GO" id="GO:0009037">
    <property type="term" value="F:tyrosine-based site-specific recombinase activity"/>
    <property type="evidence" value="ECO:0007669"/>
    <property type="project" value="UniProtKB-UniRule"/>
</dbReference>
<dbReference type="GO" id="GO:0051301">
    <property type="term" value="P:cell division"/>
    <property type="evidence" value="ECO:0007669"/>
    <property type="project" value="UniProtKB-KW"/>
</dbReference>
<dbReference type="GO" id="GO:0007059">
    <property type="term" value="P:chromosome segregation"/>
    <property type="evidence" value="ECO:0007669"/>
    <property type="project" value="UniProtKB-UniRule"/>
</dbReference>
<dbReference type="GO" id="GO:0006313">
    <property type="term" value="P:DNA transposition"/>
    <property type="evidence" value="ECO:0007669"/>
    <property type="project" value="UniProtKB-UniRule"/>
</dbReference>
<dbReference type="CDD" id="cd00798">
    <property type="entry name" value="INT_XerDC_C"/>
    <property type="match status" value="1"/>
</dbReference>
<dbReference type="Gene3D" id="1.10.150.130">
    <property type="match status" value="1"/>
</dbReference>
<dbReference type="Gene3D" id="1.10.443.10">
    <property type="entry name" value="Intergrase catalytic core"/>
    <property type="match status" value="1"/>
</dbReference>
<dbReference type="HAMAP" id="MF_01808">
    <property type="entry name" value="Recomb_XerC_XerD"/>
    <property type="match status" value="1"/>
</dbReference>
<dbReference type="HAMAP" id="MF_01807">
    <property type="entry name" value="Recomb_XerD"/>
    <property type="match status" value="1"/>
</dbReference>
<dbReference type="InterPro" id="IPR044068">
    <property type="entry name" value="CB"/>
</dbReference>
<dbReference type="InterPro" id="IPR011010">
    <property type="entry name" value="DNA_brk_join_enz"/>
</dbReference>
<dbReference type="InterPro" id="IPR013762">
    <property type="entry name" value="Integrase-like_cat_sf"/>
</dbReference>
<dbReference type="InterPro" id="IPR002104">
    <property type="entry name" value="Integrase_catalytic"/>
</dbReference>
<dbReference type="InterPro" id="IPR010998">
    <property type="entry name" value="Integrase_recombinase_N"/>
</dbReference>
<dbReference type="InterPro" id="IPR004107">
    <property type="entry name" value="Integrase_SAM-like_N"/>
</dbReference>
<dbReference type="InterPro" id="IPR011932">
    <property type="entry name" value="Recomb_XerD"/>
</dbReference>
<dbReference type="InterPro" id="IPR023009">
    <property type="entry name" value="Tyrosine_recombinase_XerC/XerD"/>
</dbReference>
<dbReference type="InterPro" id="IPR050090">
    <property type="entry name" value="Tyrosine_recombinase_XerCD"/>
</dbReference>
<dbReference type="NCBIfam" id="NF001399">
    <property type="entry name" value="PRK00283.1"/>
    <property type="match status" value="1"/>
</dbReference>
<dbReference type="NCBIfam" id="NF040815">
    <property type="entry name" value="recomb_XerA_Arch"/>
    <property type="match status" value="1"/>
</dbReference>
<dbReference type="NCBIfam" id="TIGR02225">
    <property type="entry name" value="recomb_XerD"/>
    <property type="match status" value="1"/>
</dbReference>
<dbReference type="PANTHER" id="PTHR30349">
    <property type="entry name" value="PHAGE INTEGRASE-RELATED"/>
    <property type="match status" value="1"/>
</dbReference>
<dbReference type="PANTHER" id="PTHR30349:SF81">
    <property type="entry name" value="TYROSINE RECOMBINASE XERC"/>
    <property type="match status" value="1"/>
</dbReference>
<dbReference type="Pfam" id="PF02899">
    <property type="entry name" value="Phage_int_SAM_1"/>
    <property type="match status" value="1"/>
</dbReference>
<dbReference type="Pfam" id="PF00589">
    <property type="entry name" value="Phage_integrase"/>
    <property type="match status" value="1"/>
</dbReference>
<dbReference type="SUPFAM" id="SSF56349">
    <property type="entry name" value="DNA breaking-rejoining enzymes"/>
    <property type="match status" value="1"/>
</dbReference>
<dbReference type="PROSITE" id="PS51900">
    <property type="entry name" value="CB"/>
    <property type="match status" value="1"/>
</dbReference>
<dbReference type="PROSITE" id="PS51898">
    <property type="entry name" value="TYR_RECOMBINASE"/>
    <property type="match status" value="1"/>
</dbReference>
<evidence type="ECO:0000255" key="1">
    <source>
        <dbReference type="HAMAP-Rule" id="MF_01807"/>
    </source>
</evidence>
<evidence type="ECO:0000255" key="2">
    <source>
        <dbReference type="PROSITE-ProRule" id="PRU01246"/>
    </source>
</evidence>
<evidence type="ECO:0000255" key="3">
    <source>
        <dbReference type="PROSITE-ProRule" id="PRU01248"/>
    </source>
</evidence>
<keyword id="KW-0131">Cell cycle</keyword>
<keyword id="KW-0132">Cell division</keyword>
<keyword id="KW-0159">Chromosome partition</keyword>
<keyword id="KW-0963">Cytoplasm</keyword>
<keyword id="KW-0229">DNA integration</keyword>
<keyword id="KW-0233">DNA recombination</keyword>
<keyword id="KW-0238">DNA-binding</keyword>
<gene>
    <name evidence="1" type="primary">xerD</name>
    <name type="ordered locus">LMOf2365_1985</name>
</gene>
<feature type="chain" id="PRO_0000095395" description="Tyrosine recombinase XerD">
    <location>
        <begin position="1"/>
        <end position="297"/>
    </location>
</feature>
<feature type="domain" description="Core-binding (CB)" evidence="3">
    <location>
        <begin position="1"/>
        <end position="86"/>
    </location>
</feature>
<feature type="domain" description="Tyr recombinase" evidence="2">
    <location>
        <begin position="107"/>
        <end position="291"/>
    </location>
</feature>
<feature type="active site" evidence="1">
    <location>
        <position position="147"/>
    </location>
</feature>
<feature type="active site" evidence="1">
    <location>
        <position position="171"/>
    </location>
</feature>
<feature type="active site" evidence="1">
    <location>
        <position position="243"/>
    </location>
</feature>
<feature type="active site" evidence="1">
    <location>
        <position position="246"/>
    </location>
</feature>
<feature type="active site" evidence="1">
    <location>
        <position position="269"/>
    </location>
</feature>
<feature type="active site" description="O-(3'-phospho-DNA)-tyrosine intermediate" evidence="1">
    <location>
        <position position="278"/>
    </location>
</feature>
<name>XERD_LISMF</name>
<accession>Q71Y59</accession>